<gene>
    <name evidence="1" type="primary">cysS</name>
    <name type="ordered locus">Swoo_3116</name>
</gene>
<dbReference type="EC" id="6.1.1.16" evidence="1"/>
<dbReference type="EMBL" id="CP000961">
    <property type="protein sequence ID" value="ACA87387.1"/>
    <property type="molecule type" value="Genomic_DNA"/>
</dbReference>
<dbReference type="RefSeq" id="WP_012325723.1">
    <property type="nucleotide sequence ID" value="NC_010506.1"/>
</dbReference>
<dbReference type="SMR" id="B1KLU0"/>
<dbReference type="STRING" id="392500.Swoo_3116"/>
<dbReference type="KEGG" id="swd:Swoo_3116"/>
<dbReference type="eggNOG" id="COG0215">
    <property type="taxonomic scope" value="Bacteria"/>
</dbReference>
<dbReference type="HOGENOM" id="CLU_013528_0_1_6"/>
<dbReference type="Proteomes" id="UP000002168">
    <property type="component" value="Chromosome"/>
</dbReference>
<dbReference type="GO" id="GO:0005829">
    <property type="term" value="C:cytosol"/>
    <property type="evidence" value="ECO:0007669"/>
    <property type="project" value="TreeGrafter"/>
</dbReference>
<dbReference type="GO" id="GO:0005524">
    <property type="term" value="F:ATP binding"/>
    <property type="evidence" value="ECO:0007669"/>
    <property type="project" value="UniProtKB-UniRule"/>
</dbReference>
<dbReference type="GO" id="GO:0004817">
    <property type="term" value="F:cysteine-tRNA ligase activity"/>
    <property type="evidence" value="ECO:0007669"/>
    <property type="project" value="UniProtKB-UniRule"/>
</dbReference>
<dbReference type="GO" id="GO:0008270">
    <property type="term" value="F:zinc ion binding"/>
    <property type="evidence" value="ECO:0007669"/>
    <property type="project" value="UniProtKB-UniRule"/>
</dbReference>
<dbReference type="GO" id="GO:0006423">
    <property type="term" value="P:cysteinyl-tRNA aminoacylation"/>
    <property type="evidence" value="ECO:0007669"/>
    <property type="project" value="UniProtKB-UniRule"/>
</dbReference>
<dbReference type="CDD" id="cd07963">
    <property type="entry name" value="Anticodon_Ia_Cys"/>
    <property type="match status" value="1"/>
</dbReference>
<dbReference type="CDD" id="cd00672">
    <property type="entry name" value="CysRS_core"/>
    <property type="match status" value="1"/>
</dbReference>
<dbReference type="FunFam" id="1.20.120.1910:FF:000001">
    <property type="entry name" value="Cysteine--tRNA ligase"/>
    <property type="match status" value="1"/>
</dbReference>
<dbReference type="FunFam" id="3.40.50.620:FF:000009">
    <property type="entry name" value="Cysteine--tRNA ligase"/>
    <property type="match status" value="1"/>
</dbReference>
<dbReference type="Gene3D" id="1.20.120.1910">
    <property type="entry name" value="Cysteine-tRNA ligase, C-terminal anti-codon recognition domain"/>
    <property type="match status" value="1"/>
</dbReference>
<dbReference type="Gene3D" id="3.40.50.620">
    <property type="entry name" value="HUPs"/>
    <property type="match status" value="1"/>
</dbReference>
<dbReference type="HAMAP" id="MF_00041">
    <property type="entry name" value="Cys_tRNA_synth"/>
    <property type="match status" value="1"/>
</dbReference>
<dbReference type="InterPro" id="IPR015803">
    <property type="entry name" value="Cys-tRNA-ligase"/>
</dbReference>
<dbReference type="InterPro" id="IPR015273">
    <property type="entry name" value="Cys-tRNA-synt_Ia_DALR"/>
</dbReference>
<dbReference type="InterPro" id="IPR024909">
    <property type="entry name" value="Cys-tRNA/MSH_ligase"/>
</dbReference>
<dbReference type="InterPro" id="IPR056411">
    <property type="entry name" value="CysS_C"/>
</dbReference>
<dbReference type="InterPro" id="IPR014729">
    <property type="entry name" value="Rossmann-like_a/b/a_fold"/>
</dbReference>
<dbReference type="InterPro" id="IPR032678">
    <property type="entry name" value="tRNA-synt_1_cat_dom"/>
</dbReference>
<dbReference type="InterPro" id="IPR009080">
    <property type="entry name" value="tRNAsynth_Ia_anticodon-bd"/>
</dbReference>
<dbReference type="NCBIfam" id="TIGR00435">
    <property type="entry name" value="cysS"/>
    <property type="match status" value="1"/>
</dbReference>
<dbReference type="PANTHER" id="PTHR10890:SF3">
    <property type="entry name" value="CYSTEINE--TRNA LIGASE, CYTOPLASMIC"/>
    <property type="match status" value="1"/>
</dbReference>
<dbReference type="PANTHER" id="PTHR10890">
    <property type="entry name" value="CYSTEINYL-TRNA SYNTHETASE"/>
    <property type="match status" value="1"/>
</dbReference>
<dbReference type="Pfam" id="PF23493">
    <property type="entry name" value="CysS_C"/>
    <property type="match status" value="1"/>
</dbReference>
<dbReference type="Pfam" id="PF09190">
    <property type="entry name" value="DALR_2"/>
    <property type="match status" value="1"/>
</dbReference>
<dbReference type="Pfam" id="PF01406">
    <property type="entry name" value="tRNA-synt_1e"/>
    <property type="match status" value="1"/>
</dbReference>
<dbReference type="PRINTS" id="PR00983">
    <property type="entry name" value="TRNASYNTHCYS"/>
</dbReference>
<dbReference type="SMART" id="SM00840">
    <property type="entry name" value="DALR_2"/>
    <property type="match status" value="1"/>
</dbReference>
<dbReference type="SUPFAM" id="SSF47323">
    <property type="entry name" value="Anticodon-binding domain of a subclass of class I aminoacyl-tRNA synthetases"/>
    <property type="match status" value="1"/>
</dbReference>
<dbReference type="SUPFAM" id="SSF52374">
    <property type="entry name" value="Nucleotidylyl transferase"/>
    <property type="match status" value="1"/>
</dbReference>
<name>SYC_SHEWM</name>
<keyword id="KW-0030">Aminoacyl-tRNA synthetase</keyword>
<keyword id="KW-0067">ATP-binding</keyword>
<keyword id="KW-0963">Cytoplasm</keyword>
<keyword id="KW-0436">Ligase</keyword>
<keyword id="KW-0479">Metal-binding</keyword>
<keyword id="KW-0547">Nucleotide-binding</keyword>
<keyword id="KW-0648">Protein biosynthesis</keyword>
<keyword id="KW-1185">Reference proteome</keyword>
<keyword id="KW-0862">Zinc</keyword>
<organism>
    <name type="scientific">Shewanella woodyi (strain ATCC 51908 / MS32)</name>
    <dbReference type="NCBI Taxonomy" id="392500"/>
    <lineage>
        <taxon>Bacteria</taxon>
        <taxon>Pseudomonadati</taxon>
        <taxon>Pseudomonadota</taxon>
        <taxon>Gammaproteobacteria</taxon>
        <taxon>Alteromonadales</taxon>
        <taxon>Shewanellaceae</taxon>
        <taxon>Shewanella</taxon>
    </lineage>
</organism>
<evidence type="ECO:0000255" key="1">
    <source>
        <dbReference type="HAMAP-Rule" id="MF_00041"/>
    </source>
</evidence>
<sequence>MLKLYNSLTRQKEEFKPLQPGKVGMYVCGITIYDLCHIGHGRTFVAFDMIVRYLRYSGYDVNFLRNITDVDDKIIKRAAENKESCDSLTERLIGEMHKDFDSLNMKRPDFEPRATLHMAEIIEMVEKLIEKEHAYVSSNGDVLFSVSSFPEYGRLSGQNLEQLQAGARVEVEDSKRDPMDFVLWKMSKPGEPTWESPWGPGRPGWHIECSAMNSKHLGQHFDIHGGGSDLQFPHHENEIAQSCCAHNTPYVNYWMHTGMVMVDKEKMSKSLNNFFTIRDVLAHYDAATIRYFLLSGHYRSQLNYSEDNLKQAKSALARLYTALKDLDLTVEPAAAENFVSKFKQAMDDDFNTPEAYSVLFDMVREVNRLKVTDLAQASALAVRLKELAGVLGILEQDVDSFFKGESNDAEVAEVEALIAERNRARAEKDWPAADIARDGLNALGVILEDGPEGTTWRKK</sequence>
<proteinExistence type="inferred from homology"/>
<protein>
    <recommendedName>
        <fullName evidence="1">Cysteine--tRNA ligase</fullName>
        <ecNumber evidence="1">6.1.1.16</ecNumber>
    </recommendedName>
    <alternativeName>
        <fullName evidence="1">Cysteinyl-tRNA synthetase</fullName>
        <shortName evidence="1">CysRS</shortName>
    </alternativeName>
</protein>
<accession>B1KLU0</accession>
<feature type="chain" id="PRO_1000090873" description="Cysteine--tRNA ligase">
    <location>
        <begin position="1"/>
        <end position="459"/>
    </location>
</feature>
<feature type="short sequence motif" description="'HIGH' region">
    <location>
        <begin position="30"/>
        <end position="40"/>
    </location>
</feature>
<feature type="short sequence motif" description="'KMSKS' region">
    <location>
        <begin position="266"/>
        <end position="270"/>
    </location>
</feature>
<feature type="binding site" evidence="1">
    <location>
        <position position="28"/>
    </location>
    <ligand>
        <name>Zn(2+)</name>
        <dbReference type="ChEBI" id="CHEBI:29105"/>
    </ligand>
</feature>
<feature type="binding site" evidence="1">
    <location>
        <position position="209"/>
    </location>
    <ligand>
        <name>Zn(2+)</name>
        <dbReference type="ChEBI" id="CHEBI:29105"/>
    </ligand>
</feature>
<feature type="binding site" evidence="1">
    <location>
        <position position="234"/>
    </location>
    <ligand>
        <name>Zn(2+)</name>
        <dbReference type="ChEBI" id="CHEBI:29105"/>
    </ligand>
</feature>
<feature type="binding site" evidence="1">
    <location>
        <position position="238"/>
    </location>
    <ligand>
        <name>Zn(2+)</name>
        <dbReference type="ChEBI" id="CHEBI:29105"/>
    </ligand>
</feature>
<feature type="binding site" evidence="1">
    <location>
        <position position="269"/>
    </location>
    <ligand>
        <name>ATP</name>
        <dbReference type="ChEBI" id="CHEBI:30616"/>
    </ligand>
</feature>
<comment type="catalytic activity">
    <reaction evidence="1">
        <text>tRNA(Cys) + L-cysteine + ATP = L-cysteinyl-tRNA(Cys) + AMP + diphosphate</text>
        <dbReference type="Rhea" id="RHEA:17773"/>
        <dbReference type="Rhea" id="RHEA-COMP:9661"/>
        <dbReference type="Rhea" id="RHEA-COMP:9679"/>
        <dbReference type="ChEBI" id="CHEBI:30616"/>
        <dbReference type="ChEBI" id="CHEBI:33019"/>
        <dbReference type="ChEBI" id="CHEBI:35235"/>
        <dbReference type="ChEBI" id="CHEBI:78442"/>
        <dbReference type="ChEBI" id="CHEBI:78517"/>
        <dbReference type="ChEBI" id="CHEBI:456215"/>
        <dbReference type="EC" id="6.1.1.16"/>
    </reaction>
</comment>
<comment type="cofactor">
    <cofactor evidence="1">
        <name>Zn(2+)</name>
        <dbReference type="ChEBI" id="CHEBI:29105"/>
    </cofactor>
    <text evidence="1">Binds 1 zinc ion per subunit.</text>
</comment>
<comment type="subunit">
    <text evidence="1">Monomer.</text>
</comment>
<comment type="subcellular location">
    <subcellularLocation>
        <location evidence="1">Cytoplasm</location>
    </subcellularLocation>
</comment>
<comment type="similarity">
    <text evidence="1">Belongs to the class-I aminoacyl-tRNA synthetase family.</text>
</comment>
<reference key="1">
    <citation type="submission" date="2008-02" db="EMBL/GenBank/DDBJ databases">
        <title>Complete sequence of Shewanella woodyi ATCC 51908.</title>
        <authorList>
            <consortium name="US DOE Joint Genome Institute"/>
            <person name="Copeland A."/>
            <person name="Lucas S."/>
            <person name="Lapidus A."/>
            <person name="Glavina del Rio T."/>
            <person name="Dalin E."/>
            <person name="Tice H."/>
            <person name="Bruce D."/>
            <person name="Goodwin L."/>
            <person name="Pitluck S."/>
            <person name="Sims D."/>
            <person name="Brettin T."/>
            <person name="Detter J.C."/>
            <person name="Han C."/>
            <person name="Kuske C.R."/>
            <person name="Schmutz J."/>
            <person name="Larimer F."/>
            <person name="Land M."/>
            <person name="Hauser L."/>
            <person name="Kyrpides N."/>
            <person name="Lykidis A."/>
            <person name="Zhao J.-S."/>
            <person name="Richardson P."/>
        </authorList>
    </citation>
    <scope>NUCLEOTIDE SEQUENCE [LARGE SCALE GENOMIC DNA]</scope>
    <source>
        <strain>ATCC 51908 / MS32</strain>
    </source>
</reference>